<proteinExistence type="evidence at transcript level"/>
<organism>
    <name type="scientific">Striga asiatica</name>
    <name type="common">Asiatic witchweed</name>
    <name type="synonym">Buchnera asiatica</name>
    <dbReference type="NCBI Taxonomy" id="4170"/>
    <lineage>
        <taxon>Eukaryota</taxon>
        <taxon>Viridiplantae</taxon>
        <taxon>Streptophyta</taxon>
        <taxon>Embryophyta</taxon>
        <taxon>Tracheophyta</taxon>
        <taxon>Spermatophyta</taxon>
        <taxon>Magnoliopsida</taxon>
        <taxon>eudicotyledons</taxon>
        <taxon>Gunneridae</taxon>
        <taxon>Pentapetalae</taxon>
        <taxon>asterids</taxon>
        <taxon>lamiids</taxon>
        <taxon>Lamiales</taxon>
        <taxon>Orobanchaceae</taxon>
        <taxon>Buchnereae</taxon>
        <taxon>Striga</taxon>
    </lineage>
</organism>
<feature type="chain" id="PRO_0000370730" description="Casparian strip membrane protein 1">
    <location>
        <begin position="1"/>
        <end position="189" status="greater than"/>
    </location>
</feature>
<feature type="topological domain" description="Cytoplasmic" evidence="2">
    <location>
        <begin position="1"/>
        <end position="42"/>
    </location>
</feature>
<feature type="transmembrane region" description="Helical" evidence="2">
    <location>
        <begin position="43"/>
        <end position="63"/>
    </location>
</feature>
<feature type="topological domain" description="Extracellular" evidence="2">
    <location>
        <begin position="64"/>
        <end position="90"/>
    </location>
</feature>
<feature type="transmembrane region" description="Helical" evidence="2">
    <location>
        <begin position="91"/>
        <end position="111"/>
    </location>
</feature>
<feature type="topological domain" description="Cytoplasmic" evidence="2">
    <location>
        <begin position="112"/>
        <end position="130"/>
    </location>
</feature>
<feature type="transmembrane region" description="Helical" evidence="2">
    <location>
        <begin position="131"/>
        <end position="151"/>
    </location>
</feature>
<feature type="topological domain" description="Extracellular" evidence="2">
    <location>
        <begin position="152"/>
        <end position="189"/>
    </location>
</feature>
<feature type="non-terminal residue">
    <location>
        <position position="189"/>
    </location>
</feature>
<comment type="function">
    <text evidence="1">Regulates membrane-cell wall junctions and localized cell wall deposition. Required for establishment of the Casparian strip membrane domain (CSD) and the subsequent formation of Casparian strips, a cell wall modification of the root endodermis that determines an apoplastic barrier between the intraorganismal apoplasm and the extraorganismal apoplasm and prevents lateral diffusion (By similarity).</text>
</comment>
<comment type="subunit">
    <text evidence="1">Homodimer and heterodimers.</text>
</comment>
<comment type="subcellular location">
    <subcellularLocation>
        <location evidence="1">Cell membrane</location>
        <topology evidence="1">Multi-pass membrane protein</topology>
    </subcellularLocation>
    <text evidence="1">Very restricted localization following a belt shape within the plasma membrane which coincides with the position of the Casparian strip membrane domain in the root endodermis.</text>
</comment>
<comment type="similarity">
    <text evidence="3">Belongs to the Casparian strip membrane proteins (CASP) family.</text>
</comment>
<accession>Q1W3A5</accession>
<reference key="1">
    <citation type="submission" date="2006-03" db="EMBL/GenBank/DDBJ databases">
        <title>Cloning of genes for Striga asiatica haustorium formation by suppressive subtractive hybridization (SSH).</title>
        <authorList>
            <person name="Liang L."/>
            <person name="Lynn D.G."/>
        </authorList>
    </citation>
    <scope>NUCLEOTIDE SEQUENCE [MRNA]</scope>
</reference>
<reference key="2">
    <citation type="journal article" date="2014" name="Plant Physiol.">
        <title>Functional and evolutionary analysis of the CASPARIAN STRIP MEMBRANE DOMAIN PROTEIN family.</title>
        <authorList>
            <person name="Roppolo D."/>
            <person name="Boeckmann B."/>
            <person name="Pfister A."/>
            <person name="Boutet E."/>
            <person name="Rubio M.C."/>
            <person name="Denervaud-Tendon V."/>
            <person name="Vermeer J.E."/>
            <person name="Gheyselinck J."/>
            <person name="Xenarios I."/>
            <person name="Geldner N."/>
        </authorList>
    </citation>
    <scope>GENE FAMILY</scope>
    <scope>NOMENCLATURE</scope>
</reference>
<name>CASP1_STRAF</name>
<protein>
    <recommendedName>
        <fullName>Casparian strip membrane protein 1</fullName>
        <shortName>SaCASP1</shortName>
    </recommendedName>
</protein>
<dbReference type="EMBL" id="DQ442388">
    <property type="protein sequence ID" value="ABD98039.1"/>
    <property type="molecule type" value="mRNA"/>
</dbReference>
<dbReference type="GO" id="GO:0005886">
    <property type="term" value="C:plasma membrane"/>
    <property type="evidence" value="ECO:0007669"/>
    <property type="project" value="UniProtKB-SubCell"/>
</dbReference>
<dbReference type="GO" id="GO:0071555">
    <property type="term" value="P:cell wall organization"/>
    <property type="evidence" value="ECO:0007669"/>
    <property type="project" value="UniProtKB-KW"/>
</dbReference>
<dbReference type="InterPro" id="IPR006459">
    <property type="entry name" value="CASP/CASPL"/>
</dbReference>
<dbReference type="InterPro" id="IPR006702">
    <property type="entry name" value="CASP_dom"/>
</dbReference>
<dbReference type="InterPro" id="IPR044173">
    <property type="entry name" value="CASPL"/>
</dbReference>
<dbReference type="NCBIfam" id="TIGR01569">
    <property type="entry name" value="A_tha_TIGR01569"/>
    <property type="match status" value="1"/>
</dbReference>
<dbReference type="PANTHER" id="PTHR36488:SF11">
    <property type="entry name" value="CASP-LIKE PROTEIN"/>
    <property type="match status" value="1"/>
</dbReference>
<dbReference type="PANTHER" id="PTHR36488">
    <property type="entry name" value="CASP-LIKE PROTEIN 1U1"/>
    <property type="match status" value="1"/>
</dbReference>
<dbReference type="Pfam" id="PF04535">
    <property type="entry name" value="CASP_dom"/>
    <property type="match status" value="1"/>
</dbReference>
<keyword id="KW-1003">Cell membrane</keyword>
<keyword id="KW-0961">Cell wall biogenesis/degradation</keyword>
<keyword id="KW-0472">Membrane</keyword>
<keyword id="KW-0812">Transmembrane</keyword>
<keyword id="KW-1133">Transmembrane helix</keyword>
<evidence type="ECO:0000250" key="1"/>
<evidence type="ECO:0000255" key="2"/>
<evidence type="ECO:0000305" key="3"/>
<sequence>MEKNESSAIEIAESSKERKGKAPLLAAAVGHDRAAGYKRGVSIFDLILRISAATAALAATIVMGTTEQTLPFFTQFFQFRAQYDDLPTFTFFVVGMAIVTGYLILSVPLSIVCIARPVAIGPRFLLIVCDTVTAVLATSAAGSSAAIVYLAHNGNSDANWLAICQQFNDFCQRVSGAVVAAFVAVVCSS</sequence>